<dbReference type="EMBL" id="X73837">
    <property type="protein sequence ID" value="CAA52059.1"/>
    <property type="molecule type" value="Genomic_DNA"/>
</dbReference>
<dbReference type="PIR" id="S34653">
    <property type="entry name" value="S34653"/>
</dbReference>
<dbReference type="BMRB" id="P33745"/>
<dbReference type="Proteomes" id="UP000694395">
    <property type="component" value="Unplaced"/>
</dbReference>
<dbReference type="GO" id="GO:0045202">
    <property type="term" value="C:synapse"/>
    <property type="evidence" value="ECO:0007669"/>
    <property type="project" value="GOC"/>
</dbReference>
<dbReference type="GO" id="GO:0030354">
    <property type="term" value="F:melanin-concentrating hormone activity"/>
    <property type="evidence" value="ECO:0007669"/>
    <property type="project" value="InterPro"/>
</dbReference>
<dbReference type="GO" id="GO:0031777">
    <property type="term" value="F:type 1 melanin-concentrating hormone receptor binding"/>
    <property type="evidence" value="ECO:0007669"/>
    <property type="project" value="TreeGrafter"/>
</dbReference>
<dbReference type="GO" id="GO:0007268">
    <property type="term" value="P:chemical synaptic transmission"/>
    <property type="evidence" value="ECO:0007669"/>
    <property type="project" value="InterPro"/>
</dbReference>
<dbReference type="GO" id="GO:0007218">
    <property type="term" value="P:neuropeptide signaling pathway"/>
    <property type="evidence" value="ECO:0007669"/>
    <property type="project" value="UniProtKB-KW"/>
</dbReference>
<dbReference type="InterPro" id="IPR005456">
    <property type="entry name" value="Prepro-melanin_conc_hormone"/>
</dbReference>
<dbReference type="PANTHER" id="PTHR12091">
    <property type="entry name" value="MELANIN-CONCENTRATING HORMONE"/>
    <property type="match status" value="1"/>
</dbReference>
<dbReference type="PANTHER" id="PTHR12091:SF0">
    <property type="entry name" value="PRO-MCH"/>
    <property type="match status" value="1"/>
</dbReference>
<dbReference type="Pfam" id="PF05824">
    <property type="entry name" value="Pro-MCH"/>
    <property type="match status" value="1"/>
</dbReference>
<dbReference type="PRINTS" id="PR01641">
    <property type="entry name" value="PROMCHFAMILY"/>
</dbReference>
<protein>
    <recommendedName>
        <fullName>Pro-MCH 1</fullName>
    </recommendedName>
    <component>
        <recommendedName>
            <fullName>Neuropeptide-glutamic acid-valine</fullName>
        </recommendedName>
        <alternativeName>
            <fullName>Neuropeptide E-V</fullName>
            <shortName>NEV</shortName>
        </alternativeName>
    </component>
    <component>
        <recommendedName>
            <fullName>Melanin-concentrating hormone</fullName>
            <shortName>MCH</shortName>
        </recommendedName>
    </component>
</protein>
<accession>P33745</accession>
<evidence type="ECO:0000250" key="1"/>
<evidence type="ECO:0000255" key="2"/>
<evidence type="ECO:0000305" key="3"/>
<keyword id="KW-0165">Cleavage on pair of basic residues</keyword>
<keyword id="KW-1015">Disulfide bond</keyword>
<keyword id="KW-0372">Hormone</keyword>
<keyword id="KW-0527">Neuropeptide</keyword>
<keyword id="KW-0732">Signal</keyword>
<gene>
    <name type="primary">mch1</name>
</gene>
<proteinExistence type="evidence at transcript level"/>
<comment type="function">
    <text>Plays a role in skin pigmentation by antagonizing the action of melanotropin alpha. Induces melanin concentration within the melanophores. May participate in the control of the hypothalamo-pituitary adrenal gland axis by inhibiting the release of ACTH.</text>
</comment>
<comment type="tissue specificity">
    <text>Pituitary gland. Produced in neurons of lateral basal hypothalamus which project both to the brain and to the neural lobe of the pituitary gland from where MCH is released.</text>
</comment>
<comment type="similarity">
    <text evidence="3">Belongs to the melanin-concentrating hormone family.</text>
</comment>
<name>MCH1_ONCMY</name>
<reference key="1">
    <citation type="journal article" date="1995" name="Neuroendocrinology">
        <title>Cloning and expression of melanin-concentrating hormone genes in the rainbow trout brain.</title>
        <authorList>
            <person name="Baker B."/>
            <person name="Levy A."/>
            <person name="Hall L."/>
            <person name="Lightman S."/>
        </authorList>
    </citation>
    <scope>NUCLEOTIDE SEQUENCE [GENOMIC DNA]</scope>
</reference>
<organism>
    <name type="scientific">Oncorhynchus mykiss</name>
    <name type="common">Rainbow trout</name>
    <name type="synonym">Salmo gairdneri</name>
    <dbReference type="NCBI Taxonomy" id="8022"/>
    <lineage>
        <taxon>Eukaryota</taxon>
        <taxon>Metazoa</taxon>
        <taxon>Chordata</taxon>
        <taxon>Craniata</taxon>
        <taxon>Vertebrata</taxon>
        <taxon>Euteleostomi</taxon>
        <taxon>Actinopterygii</taxon>
        <taxon>Neopterygii</taxon>
        <taxon>Teleostei</taxon>
        <taxon>Protacanthopterygii</taxon>
        <taxon>Salmoniformes</taxon>
        <taxon>Salmonidae</taxon>
        <taxon>Salmoninae</taxon>
        <taxon>Oncorhynchus</taxon>
    </lineage>
</organism>
<sequence>MRHSVLSISFAVALFLECYTPSTAIPIGKMDDVALEQDTLDSLLRVEVSENSPDSVRGRSSKIVLLADSGLWMNLNRGLPLYKLIAAAAGPDRALTLDRREAGQDLSPSISIVRRDTMRCMVGRVYRPCWEV</sequence>
<feature type="signal peptide" evidence="2">
    <location>
        <begin position="1"/>
        <end position="24"/>
    </location>
</feature>
<feature type="chain" id="PRO_0000019126" description="Pro-MCH 1">
    <location>
        <begin position="25"/>
        <end position="132"/>
    </location>
</feature>
<feature type="peptide" id="PRO_0000019127" description="Neuropeptide-glutamic acid-valine" evidence="2">
    <location>
        <begin position="101"/>
        <end position="113"/>
    </location>
</feature>
<feature type="peptide" id="PRO_0000019128" description="Melanin-concentrating hormone">
    <location>
        <begin position="116"/>
        <end position="132"/>
    </location>
</feature>
<feature type="disulfide bond" evidence="1">
    <location>
        <begin position="120"/>
        <end position="129"/>
    </location>
</feature>